<reference key="1">
    <citation type="submission" date="2008-12" db="EMBL/GenBank/DDBJ databases">
        <title>Complete sequence of chromosome of Methylobacterium chloromethanicum CM4.</title>
        <authorList>
            <consortium name="US DOE Joint Genome Institute"/>
            <person name="Lucas S."/>
            <person name="Copeland A."/>
            <person name="Lapidus A."/>
            <person name="Glavina del Rio T."/>
            <person name="Dalin E."/>
            <person name="Tice H."/>
            <person name="Bruce D."/>
            <person name="Goodwin L."/>
            <person name="Pitluck S."/>
            <person name="Chertkov O."/>
            <person name="Brettin T."/>
            <person name="Detter J.C."/>
            <person name="Han C."/>
            <person name="Larimer F."/>
            <person name="Land M."/>
            <person name="Hauser L."/>
            <person name="Kyrpides N."/>
            <person name="Mikhailova N."/>
            <person name="Marx C."/>
            <person name="Richardson P."/>
        </authorList>
    </citation>
    <scope>NUCLEOTIDE SEQUENCE [LARGE SCALE GENOMIC DNA]</scope>
    <source>
        <strain>CM4 / NCIMB 13688</strain>
    </source>
</reference>
<gene>
    <name evidence="1" type="primary">cysD</name>
    <name type="ordered locus">Mchl_2509</name>
</gene>
<keyword id="KW-0067">ATP-binding</keyword>
<keyword id="KW-0547">Nucleotide-binding</keyword>
<keyword id="KW-0548">Nucleotidyltransferase</keyword>
<keyword id="KW-0808">Transferase</keyword>
<accession>B7L0Y0</accession>
<protein>
    <recommendedName>
        <fullName evidence="1">Sulfate adenylyltransferase subunit 2</fullName>
        <ecNumber evidence="1">2.7.7.4</ecNumber>
    </recommendedName>
    <alternativeName>
        <fullName evidence="1">ATP-sulfurylase small subunit</fullName>
    </alternativeName>
    <alternativeName>
        <fullName evidence="1">Sulfate adenylate transferase</fullName>
        <shortName evidence="1">SAT</shortName>
    </alternativeName>
</protein>
<comment type="function">
    <text evidence="1">With CysN forms the ATP sulfurylase (ATPS) that catalyzes the adenylation of sulfate producing adenosine 5'-phosphosulfate (APS) and diphosphate, the first enzymatic step in sulfur assimilation pathway. APS synthesis involves the formation of a high-energy phosphoric-sulfuric acid anhydride bond driven by GTP hydrolysis by CysN coupled to ATP hydrolysis by CysD.</text>
</comment>
<comment type="catalytic activity">
    <reaction evidence="1">
        <text>sulfate + ATP + H(+) = adenosine 5'-phosphosulfate + diphosphate</text>
        <dbReference type="Rhea" id="RHEA:18133"/>
        <dbReference type="ChEBI" id="CHEBI:15378"/>
        <dbReference type="ChEBI" id="CHEBI:16189"/>
        <dbReference type="ChEBI" id="CHEBI:30616"/>
        <dbReference type="ChEBI" id="CHEBI:33019"/>
        <dbReference type="ChEBI" id="CHEBI:58243"/>
        <dbReference type="EC" id="2.7.7.4"/>
    </reaction>
</comment>
<comment type="pathway">
    <text evidence="1">Sulfur metabolism; hydrogen sulfide biosynthesis; sulfite from sulfate: step 1/3.</text>
</comment>
<comment type="subunit">
    <text evidence="1">Heterodimer composed of CysD, the smaller subunit, and CysN.</text>
</comment>
<comment type="similarity">
    <text evidence="1">Belongs to the PAPS reductase family. CysD subfamily.</text>
</comment>
<feature type="chain" id="PRO_1000117943" description="Sulfate adenylyltransferase subunit 2">
    <location>
        <begin position="1"/>
        <end position="309"/>
    </location>
</feature>
<evidence type="ECO:0000255" key="1">
    <source>
        <dbReference type="HAMAP-Rule" id="MF_00064"/>
    </source>
</evidence>
<name>CYSD_METC4</name>
<organism>
    <name type="scientific">Methylorubrum extorquens (strain CM4 / NCIMB 13688)</name>
    <name type="common">Methylobacterium extorquens</name>
    <dbReference type="NCBI Taxonomy" id="440085"/>
    <lineage>
        <taxon>Bacteria</taxon>
        <taxon>Pseudomonadati</taxon>
        <taxon>Pseudomonadota</taxon>
        <taxon>Alphaproteobacteria</taxon>
        <taxon>Hyphomicrobiales</taxon>
        <taxon>Methylobacteriaceae</taxon>
        <taxon>Methylorubrum</taxon>
    </lineage>
</organism>
<sequence>MSAAVAAPARTRLTHLQRLEAESIHIFREAVAEAENPVMLYSIGKDSSVLLHLALKAFAPGRLPFPLMHIDTTWKFREMIAFRDRRAKELGLELIVHTNQDGLAKGVGPVSHGSEVHTDVMKTQALRQALDKYKYDVAFGGARRDEEASRAKERIVSLRNGQHRWDPKRQRAEPWHLYNFKKRRGESFRVFPLSNWTELDIWLYIEQENIPIVPLYFAAERPVVERDGQLIMVDDERFPLEPGETPQQRQVRFRTLGCYPLTGAVESPAATLPEIIGETLAARTSERQGRVIDKDGAGAMERKKQEGYF</sequence>
<proteinExistence type="inferred from homology"/>
<dbReference type="EC" id="2.7.7.4" evidence="1"/>
<dbReference type="EMBL" id="CP001298">
    <property type="protein sequence ID" value="ACK83351.1"/>
    <property type="molecule type" value="Genomic_DNA"/>
</dbReference>
<dbReference type="RefSeq" id="WP_003606413.1">
    <property type="nucleotide sequence ID" value="NC_011757.1"/>
</dbReference>
<dbReference type="SMR" id="B7L0Y0"/>
<dbReference type="KEGG" id="mch:Mchl_2509"/>
<dbReference type="HOGENOM" id="CLU_043026_0_0_5"/>
<dbReference type="UniPathway" id="UPA00140">
    <property type="reaction ID" value="UER00204"/>
</dbReference>
<dbReference type="Proteomes" id="UP000002385">
    <property type="component" value="Chromosome"/>
</dbReference>
<dbReference type="GO" id="GO:0005524">
    <property type="term" value="F:ATP binding"/>
    <property type="evidence" value="ECO:0007669"/>
    <property type="project" value="UniProtKB-KW"/>
</dbReference>
<dbReference type="GO" id="GO:0004781">
    <property type="term" value="F:sulfate adenylyltransferase (ATP) activity"/>
    <property type="evidence" value="ECO:0007669"/>
    <property type="project" value="UniProtKB-UniRule"/>
</dbReference>
<dbReference type="GO" id="GO:0070814">
    <property type="term" value="P:hydrogen sulfide biosynthetic process"/>
    <property type="evidence" value="ECO:0007669"/>
    <property type="project" value="UniProtKB-UniRule"/>
</dbReference>
<dbReference type="GO" id="GO:0000103">
    <property type="term" value="P:sulfate assimilation"/>
    <property type="evidence" value="ECO:0007669"/>
    <property type="project" value="UniProtKB-UniRule"/>
</dbReference>
<dbReference type="FunFam" id="3.40.50.620:FF:000002">
    <property type="entry name" value="Sulfate adenylyltransferase subunit 2"/>
    <property type="match status" value="1"/>
</dbReference>
<dbReference type="Gene3D" id="3.40.50.620">
    <property type="entry name" value="HUPs"/>
    <property type="match status" value="1"/>
</dbReference>
<dbReference type="HAMAP" id="MF_00064">
    <property type="entry name" value="Sulf_adenylyltr_sub2"/>
    <property type="match status" value="1"/>
</dbReference>
<dbReference type="InterPro" id="IPR002500">
    <property type="entry name" value="PAPS_reduct_dom"/>
</dbReference>
<dbReference type="InterPro" id="IPR014729">
    <property type="entry name" value="Rossmann-like_a/b/a_fold"/>
</dbReference>
<dbReference type="InterPro" id="IPR011784">
    <property type="entry name" value="SO4_adenylTrfase_ssu"/>
</dbReference>
<dbReference type="InterPro" id="IPR050128">
    <property type="entry name" value="Sulfate_adenylyltrnsfr_sub2"/>
</dbReference>
<dbReference type="NCBIfam" id="TIGR02039">
    <property type="entry name" value="CysD"/>
    <property type="match status" value="1"/>
</dbReference>
<dbReference type="NCBIfam" id="NF003587">
    <property type="entry name" value="PRK05253.1"/>
    <property type="match status" value="1"/>
</dbReference>
<dbReference type="NCBIfam" id="NF009214">
    <property type="entry name" value="PRK12563.1"/>
    <property type="match status" value="1"/>
</dbReference>
<dbReference type="PANTHER" id="PTHR43196">
    <property type="entry name" value="SULFATE ADENYLYLTRANSFERASE SUBUNIT 2"/>
    <property type="match status" value="1"/>
</dbReference>
<dbReference type="PANTHER" id="PTHR43196:SF1">
    <property type="entry name" value="SULFATE ADENYLYLTRANSFERASE SUBUNIT 2"/>
    <property type="match status" value="1"/>
</dbReference>
<dbReference type="Pfam" id="PF01507">
    <property type="entry name" value="PAPS_reduct"/>
    <property type="match status" value="1"/>
</dbReference>
<dbReference type="PIRSF" id="PIRSF002936">
    <property type="entry name" value="CysDAde_trans"/>
    <property type="match status" value="1"/>
</dbReference>
<dbReference type="SUPFAM" id="SSF52402">
    <property type="entry name" value="Adenine nucleotide alpha hydrolases-like"/>
    <property type="match status" value="1"/>
</dbReference>